<accession>Q3AW53</accession>
<protein>
    <recommendedName>
        <fullName evidence="2">Elongation factor Tu</fullName>
        <shortName evidence="2">EF-Tu</shortName>
        <ecNumber evidence="2">3.6.5.3</ecNumber>
    </recommendedName>
</protein>
<name>EFTU_SYNS9</name>
<gene>
    <name evidence="2" type="primary">tuf</name>
    <name type="ordered locus">Syncc9902_2022</name>
</gene>
<reference key="1">
    <citation type="submission" date="2005-08" db="EMBL/GenBank/DDBJ databases">
        <title>Complete sequence of Synechococcus sp. CC9902.</title>
        <authorList>
            <person name="Copeland A."/>
            <person name="Lucas S."/>
            <person name="Lapidus A."/>
            <person name="Barry K."/>
            <person name="Detter J.C."/>
            <person name="Glavina T."/>
            <person name="Hammon N."/>
            <person name="Israni S."/>
            <person name="Pitluck S."/>
            <person name="Martinez M."/>
            <person name="Schmutz J."/>
            <person name="Larimer F."/>
            <person name="Land M."/>
            <person name="Kyrpides N."/>
            <person name="Ivanova N."/>
            <person name="Richardson P."/>
        </authorList>
    </citation>
    <scope>NUCLEOTIDE SEQUENCE [LARGE SCALE GENOMIC DNA]</scope>
    <source>
        <strain>CC9902</strain>
    </source>
</reference>
<evidence type="ECO:0000250" key="1"/>
<evidence type="ECO:0000255" key="2">
    <source>
        <dbReference type="HAMAP-Rule" id="MF_00118"/>
    </source>
</evidence>
<dbReference type="EC" id="3.6.5.3" evidence="2"/>
<dbReference type="EMBL" id="CP000097">
    <property type="protein sequence ID" value="ABB26980.1"/>
    <property type="molecule type" value="Genomic_DNA"/>
</dbReference>
<dbReference type="RefSeq" id="WP_011360770.1">
    <property type="nucleotide sequence ID" value="NC_007513.1"/>
</dbReference>
<dbReference type="SMR" id="Q3AW53"/>
<dbReference type="STRING" id="316279.Syncc9902_2022"/>
<dbReference type="KEGG" id="sye:Syncc9902_2022"/>
<dbReference type="eggNOG" id="COG0050">
    <property type="taxonomic scope" value="Bacteria"/>
</dbReference>
<dbReference type="HOGENOM" id="CLU_007265_0_1_3"/>
<dbReference type="OrthoDB" id="9804504at2"/>
<dbReference type="Proteomes" id="UP000002712">
    <property type="component" value="Chromosome"/>
</dbReference>
<dbReference type="GO" id="GO:0005829">
    <property type="term" value="C:cytosol"/>
    <property type="evidence" value="ECO:0007669"/>
    <property type="project" value="TreeGrafter"/>
</dbReference>
<dbReference type="GO" id="GO:0005525">
    <property type="term" value="F:GTP binding"/>
    <property type="evidence" value="ECO:0007669"/>
    <property type="project" value="UniProtKB-UniRule"/>
</dbReference>
<dbReference type="GO" id="GO:0003924">
    <property type="term" value="F:GTPase activity"/>
    <property type="evidence" value="ECO:0007669"/>
    <property type="project" value="InterPro"/>
</dbReference>
<dbReference type="GO" id="GO:0003746">
    <property type="term" value="F:translation elongation factor activity"/>
    <property type="evidence" value="ECO:0007669"/>
    <property type="project" value="UniProtKB-UniRule"/>
</dbReference>
<dbReference type="CDD" id="cd01884">
    <property type="entry name" value="EF_Tu"/>
    <property type="match status" value="1"/>
</dbReference>
<dbReference type="CDD" id="cd03697">
    <property type="entry name" value="EFTU_II"/>
    <property type="match status" value="1"/>
</dbReference>
<dbReference type="CDD" id="cd03707">
    <property type="entry name" value="EFTU_III"/>
    <property type="match status" value="1"/>
</dbReference>
<dbReference type="FunFam" id="2.40.30.10:FF:000001">
    <property type="entry name" value="Elongation factor Tu"/>
    <property type="match status" value="1"/>
</dbReference>
<dbReference type="FunFam" id="3.40.50.300:FF:000003">
    <property type="entry name" value="Elongation factor Tu"/>
    <property type="match status" value="1"/>
</dbReference>
<dbReference type="Gene3D" id="3.40.50.300">
    <property type="entry name" value="P-loop containing nucleotide triphosphate hydrolases"/>
    <property type="match status" value="1"/>
</dbReference>
<dbReference type="Gene3D" id="2.40.30.10">
    <property type="entry name" value="Translation factors"/>
    <property type="match status" value="2"/>
</dbReference>
<dbReference type="HAMAP" id="MF_00118_B">
    <property type="entry name" value="EF_Tu_B"/>
    <property type="match status" value="1"/>
</dbReference>
<dbReference type="InterPro" id="IPR041709">
    <property type="entry name" value="EF-Tu_GTP-bd"/>
</dbReference>
<dbReference type="InterPro" id="IPR050055">
    <property type="entry name" value="EF-Tu_GTPase"/>
</dbReference>
<dbReference type="InterPro" id="IPR004161">
    <property type="entry name" value="EFTu-like_2"/>
</dbReference>
<dbReference type="InterPro" id="IPR033720">
    <property type="entry name" value="EFTU_2"/>
</dbReference>
<dbReference type="InterPro" id="IPR031157">
    <property type="entry name" value="G_TR_CS"/>
</dbReference>
<dbReference type="InterPro" id="IPR027417">
    <property type="entry name" value="P-loop_NTPase"/>
</dbReference>
<dbReference type="InterPro" id="IPR005225">
    <property type="entry name" value="Small_GTP-bd"/>
</dbReference>
<dbReference type="InterPro" id="IPR000795">
    <property type="entry name" value="T_Tr_GTP-bd_dom"/>
</dbReference>
<dbReference type="InterPro" id="IPR009000">
    <property type="entry name" value="Transl_B-barrel_sf"/>
</dbReference>
<dbReference type="InterPro" id="IPR009001">
    <property type="entry name" value="Transl_elong_EF1A/Init_IF2_C"/>
</dbReference>
<dbReference type="InterPro" id="IPR004541">
    <property type="entry name" value="Transl_elong_EFTu/EF1A_bac/org"/>
</dbReference>
<dbReference type="InterPro" id="IPR004160">
    <property type="entry name" value="Transl_elong_EFTu/EF1A_C"/>
</dbReference>
<dbReference type="NCBIfam" id="TIGR00485">
    <property type="entry name" value="EF-Tu"/>
    <property type="match status" value="1"/>
</dbReference>
<dbReference type="NCBIfam" id="NF000766">
    <property type="entry name" value="PRK00049.1"/>
    <property type="match status" value="1"/>
</dbReference>
<dbReference type="NCBIfam" id="NF009372">
    <property type="entry name" value="PRK12735.1"/>
    <property type="match status" value="1"/>
</dbReference>
<dbReference type="NCBIfam" id="NF009373">
    <property type="entry name" value="PRK12736.1"/>
    <property type="match status" value="1"/>
</dbReference>
<dbReference type="NCBIfam" id="TIGR00231">
    <property type="entry name" value="small_GTP"/>
    <property type="match status" value="1"/>
</dbReference>
<dbReference type="PANTHER" id="PTHR43721:SF22">
    <property type="entry name" value="ELONGATION FACTOR TU, MITOCHONDRIAL"/>
    <property type="match status" value="1"/>
</dbReference>
<dbReference type="PANTHER" id="PTHR43721">
    <property type="entry name" value="ELONGATION FACTOR TU-RELATED"/>
    <property type="match status" value="1"/>
</dbReference>
<dbReference type="Pfam" id="PF00009">
    <property type="entry name" value="GTP_EFTU"/>
    <property type="match status" value="1"/>
</dbReference>
<dbReference type="Pfam" id="PF03144">
    <property type="entry name" value="GTP_EFTU_D2"/>
    <property type="match status" value="1"/>
</dbReference>
<dbReference type="Pfam" id="PF03143">
    <property type="entry name" value="GTP_EFTU_D3"/>
    <property type="match status" value="1"/>
</dbReference>
<dbReference type="PRINTS" id="PR00315">
    <property type="entry name" value="ELONGATNFCT"/>
</dbReference>
<dbReference type="SUPFAM" id="SSF50465">
    <property type="entry name" value="EF-Tu/eEF-1alpha/eIF2-gamma C-terminal domain"/>
    <property type="match status" value="1"/>
</dbReference>
<dbReference type="SUPFAM" id="SSF52540">
    <property type="entry name" value="P-loop containing nucleoside triphosphate hydrolases"/>
    <property type="match status" value="1"/>
</dbReference>
<dbReference type="SUPFAM" id="SSF50447">
    <property type="entry name" value="Translation proteins"/>
    <property type="match status" value="1"/>
</dbReference>
<dbReference type="PROSITE" id="PS00301">
    <property type="entry name" value="G_TR_1"/>
    <property type="match status" value="1"/>
</dbReference>
<dbReference type="PROSITE" id="PS51722">
    <property type="entry name" value="G_TR_2"/>
    <property type="match status" value="1"/>
</dbReference>
<organism>
    <name type="scientific">Synechococcus sp. (strain CC9902)</name>
    <dbReference type="NCBI Taxonomy" id="316279"/>
    <lineage>
        <taxon>Bacteria</taxon>
        <taxon>Bacillati</taxon>
        <taxon>Cyanobacteriota</taxon>
        <taxon>Cyanophyceae</taxon>
        <taxon>Synechococcales</taxon>
        <taxon>Synechococcaceae</taxon>
        <taxon>Synechococcus</taxon>
    </lineage>
</organism>
<sequence>MAREKFERNKPHVNIGTIGHVDHGKTTLTAAITNVLAKKGQAQVQNYADIDGAPEERERGITINTAHVEYETEKRHYAHVDCPGHADYVKNMITGAAQMDGAILVCAATDGPMAQTKEHILLAKQVGVPALVVALNKCDMVDDEEIIELVEMEIRELLSSYDFPGDDIPVIQVSGLKAIEGEAEWEAKIDELMDAVDASIPEPEREVDKPFLMAIEDVFSITGRGTVATGRIERGIVKVGEEVEVVGIRDPRKTTVTGVEMFRKLLDEGMAGDNVGLLLRGIQKEDIERGMVLVKPGSITPHTKFEGQVYVLKKEEGGRHTPFFAGYRPQFYIRTTDVTGQITAFTAEDGSNVEMVMPGDNIQMTGELICPVAMEMGMRFAIREGGRTIGAGVVSKIIE</sequence>
<comment type="function">
    <text evidence="2">GTP hydrolase that promotes the GTP-dependent binding of aminoacyl-tRNA to the A-site of ribosomes during protein biosynthesis.</text>
</comment>
<comment type="catalytic activity">
    <reaction evidence="2">
        <text>GTP + H2O = GDP + phosphate + H(+)</text>
        <dbReference type="Rhea" id="RHEA:19669"/>
        <dbReference type="ChEBI" id="CHEBI:15377"/>
        <dbReference type="ChEBI" id="CHEBI:15378"/>
        <dbReference type="ChEBI" id="CHEBI:37565"/>
        <dbReference type="ChEBI" id="CHEBI:43474"/>
        <dbReference type="ChEBI" id="CHEBI:58189"/>
        <dbReference type="EC" id="3.6.5.3"/>
    </reaction>
    <physiologicalReaction direction="left-to-right" evidence="2">
        <dbReference type="Rhea" id="RHEA:19670"/>
    </physiologicalReaction>
</comment>
<comment type="subunit">
    <text evidence="2">Monomer.</text>
</comment>
<comment type="subcellular location">
    <subcellularLocation>
        <location evidence="2">Cytoplasm</location>
    </subcellularLocation>
</comment>
<comment type="similarity">
    <text evidence="2">Belongs to the TRAFAC class translation factor GTPase superfamily. Classic translation factor GTPase family. EF-Tu/EF-1A subfamily.</text>
</comment>
<keyword id="KW-0963">Cytoplasm</keyword>
<keyword id="KW-0251">Elongation factor</keyword>
<keyword id="KW-0342">GTP-binding</keyword>
<keyword id="KW-0378">Hydrolase</keyword>
<keyword id="KW-0460">Magnesium</keyword>
<keyword id="KW-0479">Metal-binding</keyword>
<keyword id="KW-0547">Nucleotide-binding</keyword>
<keyword id="KW-0648">Protein biosynthesis</keyword>
<keyword id="KW-1185">Reference proteome</keyword>
<feature type="chain" id="PRO_1000015774" description="Elongation factor Tu">
    <location>
        <begin position="1"/>
        <end position="399"/>
    </location>
</feature>
<feature type="domain" description="tr-type G">
    <location>
        <begin position="10"/>
        <end position="204"/>
    </location>
</feature>
<feature type="region of interest" description="G1" evidence="1">
    <location>
        <begin position="19"/>
        <end position="26"/>
    </location>
</feature>
<feature type="region of interest" description="G2" evidence="1">
    <location>
        <begin position="60"/>
        <end position="64"/>
    </location>
</feature>
<feature type="region of interest" description="G3" evidence="1">
    <location>
        <begin position="81"/>
        <end position="84"/>
    </location>
</feature>
<feature type="region of interest" description="G4" evidence="1">
    <location>
        <begin position="136"/>
        <end position="139"/>
    </location>
</feature>
<feature type="region of interest" description="G5" evidence="1">
    <location>
        <begin position="174"/>
        <end position="176"/>
    </location>
</feature>
<feature type="binding site" evidence="2">
    <location>
        <begin position="19"/>
        <end position="26"/>
    </location>
    <ligand>
        <name>GTP</name>
        <dbReference type="ChEBI" id="CHEBI:37565"/>
    </ligand>
</feature>
<feature type="binding site" evidence="2">
    <location>
        <position position="26"/>
    </location>
    <ligand>
        <name>Mg(2+)</name>
        <dbReference type="ChEBI" id="CHEBI:18420"/>
    </ligand>
</feature>
<feature type="binding site" evidence="2">
    <location>
        <begin position="81"/>
        <end position="85"/>
    </location>
    <ligand>
        <name>GTP</name>
        <dbReference type="ChEBI" id="CHEBI:37565"/>
    </ligand>
</feature>
<feature type="binding site" evidence="2">
    <location>
        <begin position="136"/>
        <end position="139"/>
    </location>
    <ligand>
        <name>GTP</name>
        <dbReference type="ChEBI" id="CHEBI:37565"/>
    </ligand>
</feature>
<proteinExistence type="inferred from homology"/>